<gene>
    <name evidence="1" type="primary">L2</name>
</gene>
<proteinExistence type="inferred from homology"/>
<organismHost>
    <name type="scientific">Homo sapiens</name>
    <name type="common">Human</name>
    <dbReference type="NCBI Taxonomy" id="9606"/>
</organismHost>
<reference key="1">
    <citation type="journal article" date="1994" name="Curr. Top. Microbiol. Immunol.">
        <title>Primer-directed sequencing of human papillomavirus types.</title>
        <authorList>
            <person name="Delius H."/>
            <person name="Hofmann B."/>
        </authorList>
    </citation>
    <scope>NUCLEOTIDE SEQUENCE [GENOMIC DNA]</scope>
</reference>
<comment type="function">
    <text evidence="1">Minor protein of the capsid that localizes along the inner surface of the virion, within the central cavities beneath the L1 pentamers. Plays a role in capsid stabilization through interaction with the major capsid protein L1. Once the virion enters the host cell, L2 escorts the genomic DNA into the nucleus by promoting escape from the endosomal compartments and traffic through the host Golgi network. Mechanistically, the C-terminus of L2 possesses a cell-penetrating peptide that protudes from the host endosome, interacts with host cytoplasmic retromer cargo and thereby mediates the capsid delivery to the host trans-Golgi network. Plays a role through its interaction with host dynein in the intracellular microtubule-dependent transport of viral capsid toward the nucleus. Mediates the viral genome import into the nucleus through binding to host importins. Once within the nucleus, L2 localizes viral genomes to host PML bodies in order to activate early gene expression for establishment of infection. Later on, promotes late gene expression by interacting with the viral E2 protein and by inhibiting its transcriptional activation functions. During virion assembly, encapsidates the genome by direct interaction with the viral DNA.</text>
</comment>
<comment type="subunit">
    <text evidence="1">Interacts with major capsid protein L1. Interacts with E2; this interaction inhibits E2 transcriptional activity but not the DNA replication function E2. Interacts with host GADD45GIP1. Interacts with host HSPA8; this interaction is required for L2 nuclear translocation. Interacts with host importins KPNB2 and KPNB3. Forms a complex with importin alpha2-beta1 heterodimers via interaction with the importin alpha2 adapter. Interacts with host DYNLT1; this interaction is essential for virus intracellular transport during entry. Interacts (via C-terminus) with host retromer subunits VPS35 and VPS29.</text>
</comment>
<comment type="subcellular location">
    <subcellularLocation>
        <location evidence="1">Virion</location>
    </subcellularLocation>
    <subcellularLocation>
        <location evidence="1">Host nucleus</location>
    </subcellularLocation>
    <subcellularLocation>
        <location evidence="1">Host early endosome</location>
    </subcellularLocation>
    <subcellularLocation>
        <location evidence="1">Host Golgi apparatus</location>
    </subcellularLocation>
</comment>
<comment type="PTM">
    <text evidence="1">Highly phosphorylated.</text>
</comment>
<comment type="similarity">
    <text evidence="1">Belongs to the papillomaviridae L2 protein family.</text>
</comment>
<accession>P36756</accession>
<name>VL2_HPV30</name>
<feature type="chain" id="PRO_0000133597" description="Minor capsid protein L2">
    <location>
        <begin position="1"/>
        <end position="463"/>
    </location>
</feature>
<feature type="short sequence motif" description="Nuclear localization signal" evidence="1">
    <location>
        <begin position="1"/>
        <end position="12"/>
    </location>
</feature>
<feature type="short sequence motif" description="Nuclear localization signal" evidence="1">
    <location>
        <begin position="444"/>
        <end position="452"/>
    </location>
</feature>
<feature type="disulfide bond" evidence="1">
    <location>
        <begin position="21"/>
        <end position="27"/>
    </location>
</feature>
<protein>
    <recommendedName>
        <fullName evidence="1">Minor capsid protein L2</fullName>
    </recommendedName>
</protein>
<dbReference type="EMBL" id="X74474">
    <property type="protein sequence ID" value="CAA52547.1"/>
    <property type="molecule type" value="Genomic_DNA"/>
</dbReference>
<dbReference type="PIR" id="S36507">
    <property type="entry name" value="S36507"/>
</dbReference>
<dbReference type="RefSeq" id="YP_009508158.1">
    <property type="nucleotide sequence ID" value="NC_038889.1"/>
</dbReference>
<dbReference type="GeneID" id="37619469"/>
<dbReference type="OrthoDB" id="8047at10239"/>
<dbReference type="Proteomes" id="UP000009155">
    <property type="component" value="Genome"/>
</dbReference>
<dbReference type="GO" id="GO:0043657">
    <property type="term" value="C:host cell"/>
    <property type="evidence" value="ECO:0007669"/>
    <property type="project" value="GOC"/>
</dbReference>
<dbReference type="GO" id="GO:0044174">
    <property type="term" value="C:host cell endosome"/>
    <property type="evidence" value="ECO:0007669"/>
    <property type="project" value="UniProtKB-KW"/>
</dbReference>
<dbReference type="GO" id="GO:0044177">
    <property type="term" value="C:host cell Golgi apparatus"/>
    <property type="evidence" value="ECO:0007669"/>
    <property type="project" value="UniProtKB-SubCell"/>
</dbReference>
<dbReference type="GO" id="GO:0042025">
    <property type="term" value="C:host cell nucleus"/>
    <property type="evidence" value="ECO:0007669"/>
    <property type="project" value="UniProtKB-SubCell"/>
</dbReference>
<dbReference type="GO" id="GO:0019028">
    <property type="term" value="C:viral capsid"/>
    <property type="evidence" value="ECO:0007669"/>
    <property type="project" value="UniProtKB-UniRule"/>
</dbReference>
<dbReference type="GO" id="GO:0003677">
    <property type="term" value="F:DNA binding"/>
    <property type="evidence" value="ECO:0007669"/>
    <property type="project" value="UniProtKB-UniRule"/>
</dbReference>
<dbReference type="GO" id="GO:0005198">
    <property type="term" value="F:structural molecule activity"/>
    <property type="evidence" value="ECO:0007669"/>
    <property type="project" value="UniProtKB-UniRule"/>
</dbReference>
<dbReference type="GO" id="GO:0075521">
    <property type="term" value="P:microtubule-dependent intracellular transport of viral material towards nucleus"/>
    <property type="evidence" value="ECO:0007669"/>
    <property type="project" value="UniProtKB-UniRule"/>
</dbReference>
<dbReference type="GO" id="GO:0046718">
    <property type="term" value="P:symbiont entry into host cell"/>
    <property type="evidence" value="ECO:0007669"/>
    <property type="project" value="UniProtKB-KW"/>
</dbReference>
<dbReference type="GO" id="GO:0075732">
    <property type="term" value="P:viral penetration into host nucleus"/>
    <property type="evidence" value="ECO:0007669"/>
    <property type="project" value="UniProtKB-KW"/>
</dbReference>
<dbReference type="HAMAP" id="MF_04003">
    <property type="entry name" value="PPV_L2"/>
    <property type="match status" value="1"/>
</dbReference>
<dbReference type="InterPro" id="IPR000784">
    <property type="entry name" value="Late_L2"/>
</dbReference>
<dbReference type="Pfam" id="PF00513">
    <property type="entry name" value="Late_protein_L2"/>
    <property type="match status" value="1"/>
</dbReference>
<keyword id="KW-0167">Capsid protein</keyword>
<keyword id="KW-1176">Cytoplasmic inwards viral transport</keyword>
<keyword id="KW-1015">Disulfide bond</keyword>
<keyword id="KW-0238">DNA-binding</keyword>
<keyword id="KW-1039">Host endosome</keyword>
<keyword id="KW-1040">Host Golgi apparatus</keyword>
<keyword id="KW-1048">Host nucleus</keyword>
<keyword id="KW-0945">Host-virus interaction</keyword>
<keyword id="KW-0426">Late protein</keyword>
<keyword id="KW-1177">Microtubular inwards viral transport</keyword>
<keyword id="KW-0597">Phosphoprotein</keyword>
<keyword id="KW-1185">Reference proteome</keyword>
<keyword id="KW-1163">Viral penetration into host nucleus</keyword>
<keyword id="KW-0946">Virion</keyword>
<keyword id="KW-1160">Virus entry into host cell</keyword>
<sequence length="463" mass="49903">MVAHRARRRKRASATQLYQTCKQAGTCPSDVINKIEHTTLADKILQWGSLFTFFGNLGIGTGAGSGGRAGYVPLGTRPTTVVDASPARPPIVVESVGPTDPSIVTLVEESSVVNAGASFPNFTGTAGFEVTSSSTTTPAVLDITPTTGSVHVSSTHFTNPSFVEPPVIEVPQTGEVSGHILVSTPTSGVHSYEEIPMQTFAVHGTGTEPISSTPIPGLRRIAAPRLYQRAFQQVKVTDPTFLTKPETLITVDNPVFEDADTTLTFSPSGVAPDPDFLDIVALHRPAFTTRRGGVRFSRLGTKATMRTRSGKQIGARVHYYYDVSPIAHTEEIEMQPLLSANNSFDGLYDIYANLDDEAPVSSHLSIATPSRLPTNTVPLSFSSQTTNVTIPLGKYWDVPIYSGPDIVLPTGPTTWPYAPQAPFDTTHDVVIHGSTFALWPVYFLRRRRRKHVPYFLADGGVAA</sequence>
<evidence type="ECO:0000255" key="1">
    <source>
        <dbReference type="HAMAP-Rule" id="MF_04003"/>
    </source>
</evidence>
<organism>
    <name type="scientific">Human papillomavirus 30</name>
    <dbReference type="NCBI Taxonomy" id="10611"/>
    <lineage>
        <taxon>Viruses</taxon>
        <taxon>Monodnaviria</taxon>
        <taxon>Shotokuvirae</taxon>
        <taxon>Cossaviricota</taxon>
        <taxon>Papovaviricetes</taxon>
        <taxon>Zurhausenvirales</taxon>
        <taxon>Papillomaviridae</taxon>
        <taxon>Firstpapillomavirinae</taxon>
        <taxon>Alphapapillomavirus</taxon>
        <taxon>Alphapapillomavirus 6</taxon>
    </lineage>
</organism>